<proteinExistence type="inferred from homology"/>
<organism>
    <name type="scientific">Escherichia coli O139:H28 (strain E24377A / ETEC)</name>
    <dbReference type="NCBI Taxonomy" id="331111"/>
    <lineage>
        <taxon>Bacteria</taxon>
        <taxon>Pseudomonadati</taxon>
        <taxon>Pseudomonadota</taxon>
        <taxon>Gammaproteobacteria</taxon>
        <taxon>Enterobacterales</taxon>
        <taxon>Enterobacteriaceae</taxon>
        <taxon>Escherichia</taxon>
    </lineage>
</organism>
<reference key="1">
    <citation type="journal article" date="2008" name="J. Bacteriol.">
        <title>The pangenome structure of Escherichia coli: comparative genomic analysis of E. coli commensal and pathogenic isolates.</title>
        <authorList>
            <person name="Rasko D.A."/>
            <person name="Rosovitz M.J."/>
            <person name="Myers G.S.A."/>
            <person name="Mongodin E.F."/>
            <person name="Fricke W.F."/>
            <person name="Gajer P."/>
            <person name="Crabtree J."/>
            <person name="Sebaihia M."/>
            <person name="Thomson N.R."/>
            <person name="Chaudhuri R."/>
            <person name="Henderson I.R."/>
            <person name="Sperandio V."/>
            <person name="Ravel J."/>
        </authorList>
    </citation>
    <scope>NUCLEOTIDE SEQUENCE [LARGE SCALE GENOMIC DNA]</scope>
    <source>
        <strain>E24377A / ETEC</strain>
    </source>
</reference>
<comment type="function">
    <text evidence="1">Removes the 2'-phosphate from RNA via an intermediate in which the phosphate is ADP-ribosylated by NAD followed by a presumed transesterification to release the RNA and generate ADP-ribose 1''-2''-cyclic phosphate (APPR&gt;P). May function as an ADP-ribosylase.</text>
</comment>
<comment type="similarity">
    <text evidence="1">Belongs to the KptA/TPT1 family.</text>
</comment>
<accession>A7ZVN0</accession>
<dbReference type="EC" id="2.7.1.-" evidence="1"/>
<dbReference type="EMBL" id="CP000800">
    <property type="protein sequence ID" value="ABV20032.1"/>
    <property type="molecule type" value="Genomic_DNA"/>
</dbReference>
<dbReference type="RefSeq" id="WP_001151855.1">
    <property type="nucleotide sequence ID" value="NC_009801.1"/>
</dbReference>
<dbReference type="SMR" id="A7ZVN0"/>
<dbReference type="KEGG" id="ecw:EcE24377A_4931"/>
<dbReference type="HOGENOM" id="CLU_052998_4_0_6"/>
<dbReference type="Proteomes" id="UP000001122">
    <property type="component" value="Chromosome"/>
</dbReference>
<dbReference type="GO" id="GO:0003950">
    <property type="term" value="F:NAD+ poly-ADP-ribosyltransferase activity"/>
    <property type="evidence" value="ECO:0007669"/>
    <property type="project" value="InterPro"/>
</dbReference>
<dbReference type="GO" id="GO:0000215">
    <property type="term" value="F:tRNA 2'-phosphotransferase activity"/>
    <property type="evidence" value="ECO:0007669"/>
    <property type="project" value="TreeGrafter"/>
</dbReference>
<dbReference type="GO" id="GO:0006388">
    <property type="term" value="P:tRNA splicing, via endonucleolytic cleavage and ligation"/>
    <property type="evidence" value="ECO:0007669"/>
    <property type="project" value="UniProtKB-UniRule"/>
</dbReference>
<dbReference type="FunFam" id="1.10.10.970:FF:000001">
    <property type="entry name" value="RNA 2'-phosphotransferase"/>
    <property type="match status" value="1"/>
</dbReference>
<dbReference type="FunFam" id="3.20.170.30:FF:000001">
    <property type="entry name" value="RNA 2'-phosphotransferase"/>
    <property type="match status" value="1"/>
</dbReference>
<dbReference type="Gene3D" id="3.20.170.30">
    <property type="match status" value="1"/>
</dbReference>
<dbReference type="Gene3D" id="1.10.10.970">
    <property type="entry name" value="RNA 2'-phosphotransferase, Tpt1/KptA family, N-terminal domain"/>
    <property type="match status" value="1"/>
</dbReference>
<dbReference type="HAMAP" id="MF_00299">
    <property type="entry name" value="KptA"/>
    <property type="match status" value="1"/>
</dbReference>
<dbReference type="InterPro" id="IPR002745">
    <property type="entry name" value="Ptrans_KptA/Tpt1"/>
</dbReference>
<dbReference type="InterPro" id="IPR042081">
    <property type="entry name" value="RNA_2'-PTrans_C"/>
</dbReference>
<dbReference type="InterPro" id="IPR022928">
    <property type="entry name" value="RNA_2'-PTrans_KptA"/>
</dbReference>
<dbReference type="InterPro" id="IPR042080">
    <property type="entry name" value="RNA_2'-PTrans_N"/>
</dbReference>
<dbReference type="NCBIfam" id="NF002012">
    <property type="entry name" value="PRK00819.1-1"/>
    <property type="match status" value="1"/>
</dbReference>
<dbReference type="NCBIfam" id="NF002014">
    <property type="entry name" value="PRK00819.1-4"/>
    <property type="match status" value="1"/>
</dbReference>
<dbReference type="PANTHER" id="PTHR12684">
    <property type="entry name" value="PUTATIVE PHOSPHOTRANSFERASE"/>
    <property type="match status" value="1"/>
</dbReference>
<dbReference type="PANTHER" id="PTHR12684:SF2">
    <property type="entry name" value="TRNA 2'-PHOSPHOTRANSFERASE 1"/>
    <property type="match status" value="1"/>
</dbReference>
<dbReference type="Pfam" id="PF01885">
    <property type="entry name" value="PTS_2-RNA"/>
    <property type="match status" value="1"/>
</dbReference>
<dbReference type="SUPFAM" id="SSF56399">
    <property type="entry name" value="ADP-ribosylation"/>
    <property type="match status" value="1"/>
</dbReference>
<keyword id="KW-0520">NAD</keyword>
<keyword id="KW-1185">Reference proteome</keyword>
<keyword id="KW-0808">Transferase</keyword>
<name>KPTA_ECO24</name>
<sequence length="184" mass="20530">MAKYNEKELADTSKFLSFVLRHKPEAIGIVLDREGWADIDKLILCAQKAGKRLTRALLDTVVATSDKKRFSYSSDGRCIRAVQGHSTSQVAISFAEKTPPQFLYHGTASRFLDEIKKQGLIAGERHYVHLSADEATARKVGARHGSPVILTVKAQEMAKRGLPFWQAENGVWLTSTVAVEFLEW</sequence>
<protein>
    <recommendedName>
        <fullName evidence="1">Probable RNA 2'-phosphotransferase</fullName>
        <ecNumber evidence="1">2.7.1.-</ecNumber>
    </recommendedName>
</protein>
<evidence type="ECO:0000255" key="1">
    <source>
        <dbReference type="HAMAP-Rule" id="MF_00299"/>
    </source>
</evidence>
<gene>
    <name evidence="1" type="primary">kptA</name>
    <name type="ordered locus">EcE24377A_4931</name>
</gene>
<feature type="chain" id="PRO_1000059304" description="Probable RNA 2'-phosphotransferase">
    <location>
        <begin position="1"/>
        <end position="184"/>
    </location>
</feature>